<comment type="function">
    <text evidence="1">Produces ATP from ADP in the presence of a proton gradient across the membrane.</text>
</comment>
<comment type="subunit">
    <text>F-type ATPases have 2 components, CF(1) - the catalytic core - and CF(0) - the membrane proton channel. CF(1) has five subunits: alpha(3), beta(3), gamma(1), delta(1), epsilon(1). CF(0) has three main subunits: a, b and c.</text>
</comment>
<comment type="subcellular location">
    <subcellularLocation>
        <location evidence="1">Cell inner membrane</location>
        <topology evidence="1">Peripheral membrane protein</topology>
    </subcellularLocation>
</comment>
<comment type="similarity">
    <text evidence="1">Belongs to the ATPase epsilon chain family.</text>
</comment>
<proteinExistence type="inferred from homology"/>
<name>ATPE1_METCA</name>
<protein>
    <recommendedName>
        <fullName evidence="1">ATP synthase epsilon chain 1</fullName>
    </recommendedName>
    <alternativeName>
        <fullName evidence="1">ATP synthase F1 sector epsilon subunit 1</fullName>
    </alternativeName>
    <alternativeName>
        <fullName evidence="1">F-ATPase epsilon subunit 1</fullName>
    </alternativeName>
</protein>
<accession>Q60CR3</accession>
<evidence type="ECO:0000255" key="1">
    <source>
        <dbReference type="HAMAP-Rule" id="MF_00530"/>
    </source>
</evidence>
<sequence>MAMTMHVDIVSAEGEIFSGQAELVVAPGQEGEVGIAARHAPFLSPLKPGEVRVKSEGQEPLSFYVSGGMLEVQPYLVTILSETAVRAKDIDEAAAQEAKRAAEEALADRSGRMEYAKAQAQLAEAVAQLRTLENYRKGRA</sequence>
<keyword id="KW-0066">ATP synthesis</keyword>
<keyword id="KW-0997">Cell inner membrane</keyword>
<keyword id="KW-1003">Cell membrane</keyword>
<keyword id="KW-0139">CF(1)</keyword>
<keyword id="KW-0375">Hydrogen ion transport</keyword>
<keyword id="KW-0406">Ion transport</keyword>
<keyword id="KW-0472">Membrane</keyword>
<keyword id="KW-1185">Reference proteome</keyword>
<keyword id="KW-0813">Transport</keyword>
<gene>
    <name evidence="1" type="primary">atpC1</name>
    <name type="ordered locus">MCA0013</name>
</gene>
<dbReference type="EMBL" id="AE017282">
    <property type="protein sequence ID" value="AAU90742.1"/>
    <property type="molecule type" value="Genomic_DNA"/>
</dbReference>
<dbReference type="RefSeq" id="WP_010959386.1">
    <property type="nucleotide sequence ID" value="NC_002977.6"/>
</dbReference>
<dbReference type="SMR" id="Q60CR3"/>
<dbReference type="STRING" id="243233.MCA0013"/>
<dbReference type="GeneID" id="88222366"/>
<dbReference type="KEGG" id="mca:MCA0013"/>
<dbReference type="eggNOG" id="COG0355">
    <property type="taxonomic scope" value="Bacteria"/>
</dbReference>
<dbReference type="HOGENOM" id="CLU_084338_2_0_6"/>
<dbReference type="Proteomes" id="UP000006821">
    <property type="component" value="Chromosome"/>
</dbReference>
<dbReference type="GO" id="GO:0005886">
    <property type="term" value="C:plasma membrane"/>
    <property type="evidence" value="ECO:0007669"/>
    <property type="project" value="UniProtKB-SubCell"/>
</dbReference>
<dbReference type="GO" id="GO:0045259">
    <property type="term" value="C:proton-transporting ATP synthase complex"/>
    <property type="evidence" value="ECO:0007669"/>
    <property type="project" value="UniProtKB-KW"/>
</dbReference>
<dbReference type="GO" id="GO:0005524">
    <property type="term" value="F:ATP binding"/>
    <property type="evidence" value="ECO:0007669"/>
    <property type="project" value="UniProtKB-UniRule"/>
</dbReference>
<dbReference type="GO" id="GO:0046933">
    <property type="term" value="F:proton-transporting ATP synthase activity, rotational mechanism"/>
    <property type="evidence" value="ECO:0007669"/>
    <property type="project" value="UniProtKB-UniRule"/>
</dbReference>
<dbReference type="CDD" id="cd12152">
    <property type="entry name" value="F1-ATPase_delta"/>
    <property type="match status" value="1"/>
</dbReference>
<dbReference type="FunFam" id="2.60.15.10:FF:000001">
    <property type="entry name" value="ATP synthase epsilon chain"/>
    <property type="match status" value="1"/>
</dbReference>
<dbReference type="Gene3D" id="1.20.5.440">
    <property type="entry name" value="ATP synthase delta/epsilon subunit, C-terminal domain"/>
    <property type="match status" value="1"/>
</dbReference>
<dbReference type="Gene3D" id="2.60.15.10">
    <property type="entry name" value="F0F1 ATP synthase delta/epsilon subunit, N-terminal"/>
    <property type="match status" value="1"/>
</dbReference>
<dbReference type="HAMAP" id="MF_00530">
    <property type="entry name" value="ATP_synth_epsil_bac"/>
    <property type="match status" value="1"/>
</dbReference>
<dbReference type="InterPro" id="IPR036794">
    <property type="entry name" value="ATP_F1_dsu/esu_C_sf"/>
</dbReference>
<dbReference type="InterPro" id="IPR001469">
    <property type="entry name" value="ATP_synth_F1_dsu/esu"/>
</dbReference>
<dbReference type="InterPro" id="IPR020546">
    <property type="entry name" value="ATP_synth_F1_dsu/esu_N"/>
</dbReference>
<dbReference type="InterPro" id="IPR020547">
    <property type="entry name" value="ATP_synth_F1_esu_C"/>
</dbReference>
<dbReference type="InterPro" id="IPR036771">
    <property type="entry name" value="ATPsynth_dsu/esu_N"/>
</dbReference>
<dbReference type="NCBIfam" id="TIGR01216">
    <property type="entry name" value="ATP_synt_epsi"/>
    <property type="match status" value="1"/>
</dbReference>
<dbReference type="NCBIfam" id="NF001847">
    <property type="entry name" value="PRK00571.1-4"/>
    <property type="match status" value="1"/>
</dbReference>
<dbReference type="PANTHER" id="PTHR13822">
    <property type="entry name" value="ATP SYNTHASE DELTA/EPSILON CHAIN"/>
    <property type="match status" value="1"/>
</dbReference>
<dbReference type="PANTHER" id="PTHR13822:SF10">
    <property type="entry name" value="ATP SYNTHASE EPSILON CHAIN, CHLOROPLASTIC"/>
    <property type="match status" value="1"/>
</dbReference>
<dbReference type="Pfam" id="PF00401">
    <property type="entry name" value="ATP-synt_DE"/>
    <property type="match status" value="1"/>
</dbReference>
<dbReference type="Pfam" id="PF02823">
    <property type="entry name" value="ATP-synt_DE_N"/>
    <property type="match status" value="1"/>
</dbReference>
<dbReference type="SUPFAM" id="SSF46604">
    <property type="entry name" value="Epsilon subunit of F1F0-ATP synthase C-terminal domain"/>
    <property type="match status" value="1"/>
</dbReference>
<dbReference type="SUPFAM" id="SSF51344">
    <property type="entry name" value="Epsilon subunit of F1F0-ATP synthase N-terminal domain"/>
    <property type="match status" value="1"/>
</dbReference>
<organism>
    <name type="scientific">Methylococcus capsulatus (strain ATCC 33009 / NCIMB 11132 / Bath)</name>
    <dbReference type="NCBI Taxonomy" id="243233"/>
    <lineage>
        <taxon>Bacteria</taxon>
        <taxon>Pseudomonadati</taxon>
        <taxon>Pseudomonadota</taxon>
        <taxon>Gammaproteobacteria</taxon>
        <taxon>Methylococcales</taxon>
        <taxon>Methylococcaceae</taxon>
        <taxon>Methylococcus</taxon>
    </lineage>
</organism>
<reference key="1">
    <citation type="journal article" date="2004" name="PLoS Biol.">
        <title>Genomic insights into methanotrophy: the complete genome sequence of Methylococcus capsulatus (Bath).</title>
        <authorList>
            <person name="Ward N.L."/>
            <person name="Larsen O."/>
            <person name="Sakwa J."/>
            <person name="Bruseth L."/>
            <person name="Khouri H.M."/>
            <person name="Durkin A.S."/>
            <person name="Dimitrov G."/>
            <person name="Jiang L."/>
            <person name="Scanlan D."/>
            <person name="Kang K.H."/>
            <person name="Lewis M.R."/>
            <person name="Nelson K.E."/>
            <person name="Methe B.A."/>
            <person name="Wu M."/>
            <person name="Heidelberg J.F."/>
            <person name="Paulsen I.T."/>
            <person name="Fouts D.E."/>
            <person name="Ravel J."/>
            <person name="Tettelin H."/>
            <person name="Ren Q."/>
            <person name="Read T.D."/>
            <person name="DeBoy R.T."/>
            <person name="Seshadri R."/>
            <person name="Salzberg S.L."/>
            <person name="Jensen H.B."/>
            <person name="Birkeland N.K."/>
            <person name="Nelson W.C."/>
            <person name="Dodson R.J."/>
            <person name="Grindhaug S.H."/>
            <person name="Holt I.E."/>
            <person name="Eidhammer I."/>
            <person name="Jonasen I."/>
            <person name="Vanaken S."/>
            <person name="Utterback T.R."/>
            <person name="Feldblyum T.V."/>
            <person name="Fraser C.M."/>
            <person name="Lillehaug J.R."/>
            <person name="Eisen J.A."/>
        </authorList>
    </citation>
    <scope>NUCLEOTIDE SEQUENCE [LARGE SCALE GENOMIC DNA]</scope>
    <source>
        <strain>ATCC 33009 / NCIMB 11132 / Bath</strain>
    </source>
</reference>
<feature type="chain" id="PRO_0000265839" description="ATP synthase epsilon chain 1">
    <location>
        <begin position="1"/>
        <end position="140"/>
    </location>
</feature>